<gene>
    <name type="ordered locus">At5g66670</name>
    <name type="ORF">MSN2.5</name>
</gene>
<accession>Q9LVR3</accession>
<name>U496G_ARATH</name>
<keyword id="KW-0472">Membrane</keyword>
<keyword id="KW-1185">Reference proteome</keyword>
<keyword id="KW-0812">Transmembrane</keyword>
<keyword id="KW-1133">Transmembrane helix</keyword>
<reference key="1">
    <citation type="journal article" date="2000" name="DNA Res.">
        <title>Structural analysis of Arabidopsis thaliana chromosome 5. X. Sequence features of the regions of 3,076,755 bp covered by sixty P1 and TAC clones.</title>
        <authorList>
            <person name="Sato S."/>
            <person name="Nakamura Y."/>
            <person name="Kaneko T."/>
            <person name="Katoh T."/>
            <person name="Asamizu E."/>
            <person name="Kotani H."/>
            <person name="Tabata S."/>
        </authorList>
    </citation>
    <scope>NUCLEOTIDE SEQUENCE [LARGE SCALE GENOMIC DNA]</scope>
    <source>
        <strain>cv. Columbia</strain>
    </source>
</reference>
<reference key="2">
    <citation type="journal article" date="2017" name="Plant J.">
        <title>Araport11: a complete reannotation of the Arabidopsis thaliana reference genome.</title>
        <authorList>
            <person name="Cheng C.Y."/>
            <person name="Krishnakumar V."/>
            <person name="Chan A.P."/>
            <person name="Thibaud-Nissen F."/>
            <person name="Schobel S."/>
            <person name="Town C.D."/>
        </authorList>
    </citation>
    <scope>GENOME REANNOTATION</scope>
    <source>
        <strain>cv. Columbia</strain>
    </source>
</reference>
<reference key="3">
    <citation type="journal article" date="2006" name="Plant Biotechnol. J.">
        <title>Simultaneous high-throughput recombinational cloning of open reading frames in closed and open configurations.</title>
        <authorList>
            <person name="Underwood B.A."/>
            <person name="Vanderhaeghen R."/>
            <person name="Whitford R."/>
            <person name="Town C.D."/>
            <person name="Hilson P."/>
        </authorList>
    </citation>
    <scope>NUCLEOTIDE SEQUENCE [LARGE SCALE GENOMIC DNA]</scope>
    <source>
        <strain>cv. Columbia</strain>
    </source>
</reference>
<reference key="4">
    <citation type="submission" date="2005-07" db="EMBL/GenBank/DDBJ databases">
        <title>Reconstruction of cDNA sequences for hypothetical genes in Arabidopsis thaliana from 5' and 3' RACE products.</title>
        <authorList>
            <person name="Xiao Y.-L."/>
            <person name="Underwood B.A."/>
            <person name="Moskal W.A. Jr."/>
            <person name="Redman J.C."/>
            <person name="Wang W."/>
            <person name="Monaghan E.L."/>
            <person name="Wu H.C."/>
            <person name="Utterback T."/>
            <person name="Town C.D."/>
        </authorList>
    </citation>
    <scope>NUCLEOTIDE SEQUENCE [MRNA]</scope>
    <source>
        <strain>cv. Columbia</strain>
    </source>
</reference>
<protein>
    <recommendedName>
        <fullName>UPF0496 protein At5g66670</fullName>
    </recommendedName>
</protein>
<sequence>MVFCGLFSELIKGHSSSNNNGTNVSLAKTIQTNIRSQYSSDLSSYASACKKYSSLKSFDSLLHERTNSIISSLAAQAKTRSLNIESLMEVYGYLLELNQDTVRVIIESKEDVLKNNDLKALVDVYFKSTSKTLDFCNTVEKCVKKAEISQLIIRFAVKQFETETVDTDLGESKKKKYVKTLEEMNKFKAMGDPFDGEFVTQYKSVYDEQVLLLDELRKLKVKLGKKLRNIKTWRILSNVVFATAFVTVFVLSVVAAAMMAPPVLSAVASGLTTPIEVVGMWCNKMWKEYEKAVKRQRGLVLTMELGVQANNVTMVNIKFEVENLSIRISSILKTVNFAVDREENEMATRFAMQEIKKKVEGFTEKIEEVGERAANCSKLIALGRLVVLGHILGLHIVEGGAANIISSV</sequence>
<evidence type="ECO:0000255" key="1"/>
<evidence type="ECO:0000305" key="2"/>
<organism>
    <name type="scientific">Arabidopsis thaliana</name>
    <name type="common">Mouse-ear cress</name>
    <dbReference type="NCBI Taxonomy" id="3702"/>
    <lineage>
        <taxon>Eukaryota</taxon>
        <taxon>Viridiplantae</taxon>
        <taxon>Streptophyta</taxon>
        <taxon>Embryophyta</taxon>
        <taxon>Tracheophyta</taxon>
        <taxon>Spermatophyta</taxon>
        <taxon>Magnoliopsida</taxon>
        <taxon>eudicotyledons</taxon>
        <taxon>Gunneridae</taxon>
        <taxon>Pentapetalae</taxon>
        <taxon>rosids</taxon>
        <taxon>malvids</taxon>
        <taxon>Brassicales</taxon>
        <taxon>Brassicaceae</taxon>
        <taxon>Camelineae</taxon>
        <taxon>Arabidopsis</taxon>
    </lineage>
</organism>
<comment type="subcellular location">
    <subcellularLocation>
        <location evidence="2">Membrane</location>
        <topology evidence="2">Multi-pass membrane protein</topology>
    </subcellularLocation>
</comment>
<comment type="similarity">
    <text evidence="2">Belongs to the UPF0496 family.</text>
</comment>
<proteinExistence type="evidence at transcript level"/>
<dbReference type="EMBL" id="AB018119">
    <property type="protein sequence ID" value="BAA97273.1"/>
    <property type="molecule type" value="Genomic_DNA"/>
</dbReference>
<dbReference type="EMBL" id="CP002688">
    <property type="protein sequence ID" value="AED98248.1"/>
    <property type="molecule type" value="Genomic_DNA"/>
</dbReference>
<dbReference type="EMBL" id="CP002688">
    <property type="protein sequence ID" value="AED98249.1"/>
    <property type="molecule type" value="Genomic_DNA"/>
</dbReference>
<dbReference type="EMBL" id="CP002688">
    <property type="protein sequence ID" value="ANM70076.1"/>
    <property type="molecule type" value="Genomic_DNA"/>
</dbReference>
<dbReference type="EMBL" id="CP002688">
    <property type="protein sequence ID" value="ANM70077.1"/>
    <property type="molecule type" value="Genomic_DNA"/>
</dbReference>
<dbReference type="EMBL" id="DQ459202">
    <property type="protein sequence ID" value="ABE97199.1"/>
    <property type="molecule type" value="Genomic_DNA"/>
</dbReference>
<dbReference type="EMBL" id="DQ132763">
    <property type="protein sequence ID" value="AAZ52793.1"/>
    <property type="molecule type" value="mRNA"/>
</dbReference>
<dbReference type="EMBL" id="DQ132764">
    <property type="protein sequence ID" value="AAZ52794.1"/>
    <property type="molecule type" value="mRNA"/>
</dbReference>
<dbReference type="RefSeq" id="NP_001078809.1">
    <property type="nucleotide sequence ID" value="NM_001085340.1"/>
</dbReference>
<dbReference type="RefSeq" id="NP_001318891.1">
    <property type="nucleotide sequence ID" value="NM_001345796.1"/>
</dbReference>
<dbReference type="RefSeq" id="NP_001331712.1">
    <property type="nucleotide sequence ID" value="NM_001345797.1"/>
</dbReference>
<dbReference type="RefSeq" id="NP_201468.1">
    <property type="nucleotide sequence ID" value="NM_126065.4"/>
</dbReference>
<dbReference type="SMR" id="Q9LVR3"/>
<dbReference type="STRING" id="3702.Q9LVR3"/>
<dbReference type="PaxDb" id="3702-AT5G66670.2"/>
<dbReference type="ProteomicsDB" id="242588"/>
<dbReference type="EnsemblPlants" id="AT5G66670.1">
    <property type="protein sequence ID" value="AT5G66670.1"/>
    <property type="gene ID" value="AT5G66670"/>
</dbReference>
<dbReference type="EnsemblPlants" id="AT5G66670.2">
    <property type="protein sequence ID" value="AT5G66670.2"/>
    <property type="gene ID" value="AT5G66670"/>
</dbReference>
<dbReference type="EnsemblPlants" id="AT5G66670.3">
    <property type="protein sequence ID" value="AT5G66670.3"/>
    <property type="gene ID" value="AT5G66670"/>
</dbReference>
<dbReference type="EnsemblPlants" id="AT5G66670.4">
    <property type="protein sequence ID" value="AT5G66670.4"/>
    <property type="gene ID" value="AT5G66670"/>
</dbReference>
<dbReference type="GeneID" id="836799"/>
<dbReference type="Gramene" id="AT5G66670.1">
    <property type="protein sequence ID" value="AT5G66670.1"/>
    <property type="gene ID" value="AT5G66670"/>
</dbReference>
<dbReference type="Gramene" id="AT5G66670.2">
    <property type="protein sequence ID" value="AT5G66670.2"/>
    <property type="gene ID" value="AT5G66670"/>
</dbReference>
<dbReference type="Gramene" id="AT5G66670.3">
    <property type="protein sequence ID" value="AT5G66670.3"/>
    <property type="gene ID" value="AT5G66670"/>
</dbReference>
<dbReference type="Gramene" id="AT5G66670.4">
    <property type="protein sequence ID" value="AT5G66670.4"/>
    <property type="gene ID" value="AT5G66670"/>
</dbReference>
<dbReference type="KEGG" id="ath:AT5G66670"/>
<dbReference type="Araport" id="AT5G66670"/>
<dbReference type="TAIR" id="AT5G66670"/>
<dbReference type="eggNOG" id="ENOG502QVAQ">
    <property type="taxonomic scope" value="Eukaryota"/>
</dbReference>
<dbReference type="HOGENOM" id="CLU_044778_0_0_1"/>
<dbReference type="InParanoid" id="Q9LVR3"/>
<dbReference type="OMA" id="YESVYEQ"/>
<dbReference type="PhylomeDB" id="Q9LVR3"/>
<dbReference type="PRO" id="PR:Q9LVR3"/>
<dbReference type="Proteomes" id="UP000006548">
    <property type="component" value="Chromosome 5"/>
</dbReference>
<dbReference type="ExpressionAtlas" id="Q9LVR3">
    <property type="expression patterns" value="baseline and differential"/>
</dbReference>
<dbReference type="GO" id="GO:0016020">
    <property type="term" value="C:membrane"/>
    <property type="evidence" value="ECO:0007669"/>
    <property type="project" value="UniProtKB-SubCell"/>
</dbReference>
<dbReference type="InterPro" id="IPR007749">
    <property type="entry name" value="DUF677"/>
</dbReference>
<dbReference type="PANTHER" id="PTHR31113:SF13">
    <property type="entry name" value="(RAPE) HYPOTHETICAL PROTEIN"/>
    <property type="match status" value="1"/>
</dbReference>
<dbReference type="PANTHER" id="PTHR31113">
    <property type="entry name" value="UPF0496 PROTEIN 3-RELATED"/>
    <property type="match status" value="1"/>
</dbReference>
<dbReference type="Pfam" id="PF05055">
    <property type="entry name" value="DUF677"/>
    <property type="match status" value="1"/>
</dbReference>
<feature type="chain" id="PRO_0000306892" description="UPF0496 protein At5g66670">
    <location>
        <begin position="1"/>
        <end position="408"/>
    </location>
</feature>
<feature type="transmembrane region" description="Helical" evidence="1">
    <location>
        <begin position="239"/>
        <end position="259"/>
    </location>
</feature>
<feature type="transmembrane region" description="Helical" evidence="1">
    <location>
        <begin position="262"/>
        <end position="282"/>
    </location>
</feature>